<keyword id="KW-0113">Calvin cycle</keyword>
<keyword id="KW-0120">Carbon dioxide fixation</keyword>
<keyword id="KW-0456">Lyase</keyword>
<keyword id="KW-0460">Magnesium</keyword>
<keyword id="KW-0479">Metal-binding</keyword>
<keyword id="KW-0503">Monooxygenase</keyword>
<keyword id="KW-0560">Oxidoreductase</keyword>
<feature type="chain" id="PRO_0000062631" description="Ribulose bisphosphate carboxylase large chain">
    <location>
        <begin position="1"/>
        <end position="489"/>
    </location>
</feature>
<feature type="active site" description="Proton acceptor" evidence="1">
    <location>
        <position position="180"/>
    </location>
</feature>
<feature type="active site" description="Proton acceptor" evidence="1">
    <location>
        <position position="298"/>
    </location>
</feature>
<feature type="binding site" description="in homodimeric partner" evidence="1">
    <location>
        <position position="128"/>
    </location>
    <ligand>
        <name>substrate</name>
    </ligand>
</feature>
<feature type="binding site" evidence="1">
    <location>
        <position position="178"/>
    </location>
    <ligand>
        <name>substrate</name>
    </ligand>
</feature>
<feature type="binding site" evidence="1">
    <location>
        <position position="182"/>
    </location>
    <ligand>
        <name>substrate</name>
    </ligand>
</feature>
<feature type="binding site" description="via carbamate group" evidence="1">
    <location>
        <position position="206"/>
    </location>
    <ligand>
        <name>Mg(2+)</name>
        <dbReference type="ChEBI" id="CHEBI:18420"/>
    </ligand>
</feature>
<feature type="binding site" evidence="1">
    <location>
        <position position="208"/>
    </location>
    <ligand>
        <name>Mg(2+)</name>
        <dbReference type="ChEBI" id="CHEBI:18420"/>
    </ligand>
</feature>
<feature type="binding site" evidence="1">
    <location>
        <position position="209"/>
    </location>
    <ligand>
        <name>Mg(2+)</name>
        <dbReference type="ChEBI" id="CHEBI:18420"/>
    </ligand>
</feature>
<feature type="binding site" evidence="1">
    <location>
        <position position="299"/>
    </location>
    <ligand>
        <name>substrate</name>
    </ligand>
</feature>
<feature type="binding site" evidence="1">
    <location>
        <position position="331"/>
    </location>
    <ligand>
        <name>substrate</name>
    </ligand>
</feature>
<feature type="binding site" evidence="1">
    <location>
        <position position="383"/>
    </location>
    <ligand>
        <name>substrate</name>
    </ligand>
</feature>
<feature type="site" description="Transition state stabilizer" evidence="1">
    <location>
        <position position="338"/>
    </location>
</feature>
<feature type="modified residue" description="N6-carboxylysine" evidence="1">
    <location>
        <position position="206"/>
    </location>
</feature>
<reference key="1">
    <citation type="journal article" date="2002" name="J. Bacteriol.">
        <title>Phylogeny and functional expression of ribulose 1,5-bisphosphate carboxylase/oxygenase from the autotrophic ammonia-oxidizing bacterium Nitrosospira sp. isolate 40KI.</title>
        <authorList>
            <person name="Utaaker J.B."/>
            <person name="Andersen K."/>
            <person name="Aakra A.A."/>
            <person name="Moen B."/>
            <person name="Nes I.F."/>
        </authorList>
    </citation>
    <scope>NUCLEOTIDE SEQUENCE [GENOMIC DNA]</scope>
    <scope>EXPRESSION IN R.EUTROPHA</scope>
</reference>
<evidence type="ECO:0000255" key="1">
    <source>
        <dbReference type="HAMAP-Rule" id="MF_01338"/>
    </source>
</evidence>
<dbReference type="EC" id="4.1.1.39" evidence="1"/>
<dbReference type="EMBL" id="AF426428">
    <property type="protein sequence ID" value="AAL27401.1"/>
    <property type="molecule type" value="Genomic_DNA"/>
</dbReference>
<dbReference type="GO" id="GO:0000287">
    <property type="term" value="F:magnesium ion binding"/>
    <property type="evidence" value="ECO:0007669"/>
    <property type="project" value="UniProtKB-UniRule"/>
</dbReference>
<dbReference type="GO" id="GO:0004497">
    <property type="term" value="F:monooxygenase activity"/>
    <property type="evidence" value="ECO:0007669"/>
    <property type="project" value="UniProtKB-KW"/>
</dbReference>
<dbReference type="GO" id="GO:0016984">
    <property type="term" value="F:ribulose-bisphosphate carboxylase activity"/>
    <property type="evidence" value="ECO:0007669"/>
    <property type="project" value="UniProtKB-UniRule"/>
</dbReference>
<dbReference type="GO" id="GO:0019253">
    <property type="term" value="P:reductive pentose-phosphate cycle"/>
    <property type="evidence" value="ECO:0007669"/>
    <property type="project" value="UniProtKB-UniRule"/>
</dbReference>
<dbReference type="CDD" id="cd08212">
    <property type="entry name" value="RuBisCO_large_I"/>
    <property type="match status" value="1"/>
</dbReference>
<dbReference type="Gene3D" id="3.20.20.110">
    <property type="entry name" value="Ribulose bisphosphate carboxylase, large subunit, C-terminal domain"/>
    <property type="match status" value="1"/>
</dbReference>
<dbReference type="Gene3D" id="3.30.70.150">
    <property type="entry name" value="RuBisCO large subunit, N-terminal domain"/>
    <property type="match status" value="1"/>
</dbReference>
<dbReference type="HAMAP" id="MF_01338">
    <property type="entry name" value="RuBisCO_L_type1"/>
    <property type="match status" value="1"/>
</dbReference>
<dbReference type="InterPro" id="IPR033966">
    <property type="entry name" value="RuBisCO"/>
</dbReference>
<dbReference type="InterPro" id="IPR020878">
    <property type="entry name" value="RuBisCo_large_chain_AS"/>
</dbReference>
<dbReference type="InterPro" id="IPR000685">
    <property type="entry name" value="RuBisCO_lsu_C"/>
</dbReference>
<dbReference type="InterPro" id="IPR036376">
    <property type="entry name" value="RuBisCO_lsu_C_sf"/>
</dbReference>
<dbReference type="InterPro" id="IPR017443">
    <property type="entry name" value="RuBisCO_lsu_fd_N"/>
</dbReference>
<dbReference type="InterPro" id="IPR036422">
    <property type="entry name" value="RuBisCO_lsu_N_sf"/>
</dbReference>
<dbReference type="InterPro" id="IPR020888">
    <property type="entry name" value="RuBisCO_lsuI"/>
</dbReference>
<dbReference type="NCBIfam" id="NF003252">
    <property type="entry name" value="PRK04208.1"/>
    <property type="match status" value="1"/>
</dbReference>
<dbReference type="PANTHER" id="PTHR42704">
    <property type="entry name" value="RIBULOSE BISPHOSPHATE CARBOXYLASE"/>
    <property type="match status" value="1"/>
</dbReference>
<dbReference type="PANTHER" id="PTHR42704:SF17">
    <property type="entry name" value="RIBULOSE BISPHOSPHATE CARBOXYLASE LARGE CHAIN"/>
    <property type="match status" value="1"/>
</dbReference>
<dbReference type="Pfam" id="PF00016">
    <property type="entry name" value="RuBisCO_large"/>
    <property type="match status" value="1"/>
</dbReference>
<dbReference type="Pfam" id="PF02788">
    <property type="entry name" value="RuBisCO_large_N"/>
    <property type="match status" value="1"/>
</dbReference>
<dbReference type="SFLD" id="SFLDG01052">
    <property type="entry name" value="RuBisCO"/>
    <property type="match status" value="1"/>
</dbReference>
<dbReference type="SFLD" id="SFLDS00014">
    <property type="entry name" value="RuBisCO"/>
    <property type="match status" value="1"/>
</dbReference>
<dbReference type="SFLD" id="SFLDG00301">
    <property type="entry name" value="RuBisCO-like_proteins"/>
    <property type="match status" value="1"/>
</dbReference>
<dbReference type="SUPFAM" id="SSF51649">
    <property type="entry name" value="RuBisCo, C-terminal domain"/>
    <property type="match status" value="1"/>
</dbReference>
<dbReference type="SUPFAM" id="SSF54966">
    <property type="entry name" value="RuBisCO, large subunit, small (N-terminal) domain"/>
    <property type="match status" value="1"/>
</dbReference>
<dbReference type="PROSITE" id="PS00157">
    <property type="entry name" value="RUBISCO_LARGE"/>
    <property type="match status" value="1"/>
</dbReference>
<comment type="function">
    <text>RuBisCO catalyzes two reactions: the carboxylation of D-ribulose 1,5-bisphosphate, the primary event in carbon dioxide fixation, as well as the oxidative fragmentation of the pentose substrate. Both reactions occur simultaneously and in competition at the same active site.</text>
</comment>
<comment type="catalytic activity">
    <reaction evidence="1">
        <text>2 (2R)-3-phosphoglycerate + 2 H(+) = D-ribulose 1,5-bisphosphate + CO2 + H2O</text>
        <dbReference type="Rhea" id="RHEA:23124"/>
        <dbReference type="ChEBI" id="CHEBI:15377"/>
        <dbReference type="ChEBI" id="CHEBI:15378"/>
        <dbReference type="ChEBI" id="CHEBI:16526"/>
        <dbReference type="ChEBI" id="CHEBI:57870"/>
        <dbReference type="ChEBI" id="CHEBI:58272"/>
        <dbReference type="EC" id="4.1.1.39"/>
    </reaction>
</comment>
<comment type="catalytic activity">
    <reaction evidence="1">
        <text>D-ribulose 1,5-bisphosphate + O2 = 2-phosphoglycolate + (2R)-3-phosphoglycerate + 2 H(+)</text>
        <dbReference type="Rhea" id="RHEA:36631"/>
        <dbReference type="ChEBI" id="CHEBI:15378"/>
        <dbReference type="ChEBI" id="CHEBI:15379"/>
        <dbReference type="ChEBI" id="CHEBI:57870"/>
        <dbReference type="ChEBI" id="CHEBI:58033"/>
        <dbReference type="ChEBI" id="CHEBI:58272"/>
    </reaction>
</comment>
<comment type="cofactor">
    <cofactor evidence="1">
        <name>Mg(2+)</name>
        <dbReference type="ChEBI" id="CHEBI:18420"/>
    </cofactor>
    <text evidence="1">Binds 1 Mg(2+) ion per subunit.</text>
</comment>
<comment type="subunit">
    <text evidence="1">Heterohexadecamer of 8 large chains and 8 small chains.</text>
</comment>
<comment type="miscellaneous">
    <text evidence="1">The basic functional RuBisCO is composed of a large chain homodimer in a 'head-to-tail' conformation. In form I RuBisCO this homodimer is arranged in a barrel-like tetramer with the small subunits forming a tetrameric 'cap' on each end of the 'barrel'.</text>
</comment>
<comment type="similarity">
    <text evidence="1">Belongs to the RuBisCO large chain family. Type I subfamily.</text>
</comment>
<sequence length="489" mass="54228">MSEELKGEARYKSGVMPYKKMGYWDSDYVPKDTDVIALFRITPQEGVDHEEAAAAVAGESSTATWTVVWTDRLTACELYRAKAYRSELVPNTGPGTKNEAQYFAYIAYDLDLFEGGSIANLTASIIGNVFGFKAVKALRLEDMRIPVAYLKTFQGPATGIVVERERLDKFGRHXLGATTKPKLGLSGRNYGRVVYEGLKGGLDFMKDDENINSQPFMHWRDRFLYCMEAVNKASAATGEVKGHYLNVTAGTMEEMYERAEFAKSLGSVVVMIDLVIGYTAIQSMAKWSRKNDMILHLHRAGNSTYSRQKNHGMNFRVICKWMRMAGVDHIHAGTVVGKLEGDPLMIKGFYDTLRDTHSAKNLETGLFFDQDWASLNKVMPVASGGIHAGQMHQLLDYLGEDVILQFGGGTIGHPMGIQAGAVANRVALEAMILARNEGRDYVKEGPQILQTAAKWCTPLKQALDTWKDITFNYESTDTADFVPSTTASV</sequence>
<accession>Q93A90</accession>
<organism>
    <name type="scientific">Nitrosospira sp. (strain 40KI)</name>
    <dbReference type="NCBI Taxonomy" id="174933"/>
    <lineage>
        <taxon>Bacteria</taxon>
        <taxon>Pseudomonadati</taxon>
        <taxon>Pseudomonadota</taxon>
        <taxon>Betaproteobacteria</taxon>
        <taxon>Nitrosomonadales</taxon>
        <taxon>Nitrosomonadaceae</taxon>
        <taxon>Nitrosospira</taxon>
    </lineage>
</organism>
<protein>
    <recommendedName>
        <fullName evidence="1">Ribulose bisphosphate carboxylase large chain</fullName>
        <shortName evidence="1">RuBisCO large subunit</shortName>
        <ecNumber evidence="1">4.1.1.39</ecNumber>
    </recommendedName>
</protein>
<name>RBL_NITS4</name>
<proteinExistence type="inferred from homology"/>
<gene>
    <name evidence="1" type="primary">cbbL</name>
</gene>